<gene>
    <name type="ordered locus">Rv2885c</name>
    <name type="ORF">MTCY274.16c</name>
</gene>
<dbReference type="EC" id="3.1.21.-" evidence="1"/>
<dbReference type="EMBL" id="AL123456">
    <property type="protein sequence ID" value="CCP45687.1"/>
    <property type="molecule type" value="Genomic_DNA"/>
</dbReference>
<dbReference type="PIR" id="H70924">
    <property type="entry name" value="H70924"/>
</dbReference>
<dbReference type="RefSeq" id="NP_217401.1">
    <property type="nucleotide sequence ID" value="NC_000962.3"/>
</dbReference>
<dbReference type="RefSeq" id="WP_003899524.1">
    <property type="nucleotide sequence ID" value="NC_000962.3"/>
</dbReference>
<dbReference type="SMR" id="P9WL37"/>
<dbReference type="FunCoup" id="P9WL37">
    <property type="interactions" value="2"/>
</dbReference>
<dbReference type="STRING" id="83332.Rv2885c"/>
<dbReference type="PaxDb" id="83332-Rv2885c"/>
<dbReference type="DNASU" id="887173"/>
<dbReference type="GeneID" id="887173"/>
<dbReference type="KEGG" id="mtu:Rv2885c"/>
<dbReference type="KEGG" id="mtv:RVBD_2885c"/>
<dbReference type="PATRIC" id="fig|83332.111.peg.3211"/>
<dbReference type="TubercuList" id="Rv2885c"/>
<dbReference type="eggNOG" id="COG0675">
    <property type="taxonomic scope" value="Bacteria"/>
</dbReference>
<dbReference type="InParanoid" id="P9WL37"/>
<dbReference type="OrthoDB" id="6230307at2"/>
<dbReference type="PhylomeDB" id="P9WL37"/>
<dbReference type="Proteomes" id="UP000001584">
    <property type="component" value="Chromosome"/>
</dbReference>
<dbReference type="GO" id="GO:0005886">
    <property type="term" value="C:plasma membrane"/>
    <property type="evidence" value="ECO:0007005"/>
    <property type="project" value="MTBBASE"/>
</dbReference>
<dbReference type="GO" id="GO:0003677">
    <property type="term" value="F:DNA binding"/>
    <property type="evidence" value="ECO:0007669"/>
    <property type="project" value="UniProtKB-KW"/>
</dbReference>
<dbReference type="GO" id="GO:0004519">
    <property type="term" value="F:endonuclease activity"/>
    <property type="evidence" value="ECO:0007669"/>
    <property type="project" value="UniProtKB-KW"/>
</dbReference>
<dbReference type="GO" id="GO:0046872">
    <property type="term" value="F:metal ion binding"/>
    <property type="evidence" value="ECO:0007669"/>
    <property type="project" value="UniProtKB-KW"/>
</dbReference>
<dbReference type="GO" id="GO:0006310">
    <property type="term" value="P:DNA recombination"/>
    <property type="evidence" value="ECO:0007669"/>
    <property type="project" value="UniProtKB-KW"/>
</dbReference>
<dbReference type="GO" id="GO:0032196">
    <property type="term" value="P:transposition"/>
    <property type="evidence" value="ECO:0007669"/>
    <property type="project" value="UniProtKB-KW"/>
</dbReference>
<dbReference type="InterPro" id="IPR010095">
    <property type="entry name" value="Cas12f1-like_TNB"/>
</dbReference>
<dbReference type="InterPro" id="IPR053470">
    <property type="entry name" value="RNA-guided_DNA_endonuclease"/>
</dbReference>
<dbReference type="InterPro" id="IPR001959">
    <property type="entry name" value="Transposase"/>
</dbReference>
<dbReference type="InterPro" id="IPR021027">
    <property type="entry name" value="Transposase_put_HTH"/>
</dbReference>
<dbReference type="NCBIfam" id="NF040570">
    <property type="entry name" value="guided_TnpB"/>
    <property type="match status" value="1"/>
</dbReference>
<dbReference type="NCBIfam" id="NF038280">
    <property type="entry name" value="IS607_TnpB"/>
    <property type="match status" value="1"/>
</dbReference>
<dbReference type="Pfam" id="PF07282">
    <property type="entry name" value="Cas12f1-like_TNB"/>
    <property type="match status" value="1"/>
</dbReference>
<dbReference type="Pfam" id="PF12323">
    <property type="entry name" value="HTH_OrfB_IS605"/>
    <property type="match status" value="1"/>
</dbReference>
<dbReference type="Pfam" id="PF01385">
    <property type="entry name" value="OrfB_IS605"/>
    <property type="match status" value="1"/>
</dbReference>
<keyword id="KW-0233">DNA recombination</keyword>
<keyword id="KW-0238">DNA-binding</keyword>
<keyword id="KW-0255">Endonuclease</keyword>
<keyword id="KW-0378">Hydrolase</keyword>
<keyword id="KW-0479">Metal-binding</keyword>
<keyword id="KW-0540">Nuclease</keyword>
<keyword id="KW-1185">Reference proteome</keyword>
<keyword id="KW-0814">Transposable element</keyword>
<keyword id="KW-0815">Transposition</keyword>
<keyword id="KW-0862">Zinc</keyword>
<name>Y2885_MYCTU</name>
<evidence type="ECO:0000250" key="1">
    <source>
        <dbReference type="UniProtKB" id="Q7DF80"/>
    </source>
</evidence>
<evidence type="ECO:0000256" key="2">
    <source>
        <dbReference type="SAM" id="MobiDB-lite"/>
    </source>
</evidence>
<evidence type="ECO:0000305" key="3"/>
<sequence length="460" mass="51284">MMARLKVPEGWCVQAFRFTLNPTQTQAASLARHFGARRKAFNWTVTALKADIKAWRADGTESAKPSLRVLRKRWNTVKDQVCVNAQTGQVWWPECSKEAYADGIAGAVDAYWNWQSCRAGKRAGKTVGVPRFKKKGRDADRVCFTTGAMRVEPDRRHLTLPVIGTIRTYENTRRVERLIAKGRARVLAITVRRNGTRLDASVRVLVQRPQQRRVALPDSRVGVDVGVRRLATVADAEGTVLEQVPNPRPLDAALRGLRRVSRARSRCTKGSRRYCERTTELSRLHRRVNDVRTHHLHVLTTRLAKTHGRIVVEGLDAAGMLRQKGLPGARARRRALSDAALATPRRHLSYKTGWYGSSLVVADRWFPSSKTCHACRHVQDIGWDEKWQCDGCSITHQRDDNAAINLARYEEPPSVVGPVGAAVKRGADRKTGPGPAGGREARKATGHPAGEQPRDGVQVK</sequence>
<accession>P9WL37</accession>
<accession>L0TDU6</accession>
<accession>Q10809</accession>
<organism>
    <name type="scientific">Mycobacterium tuberculosis (strain ATCC 25618 / H37Rv)</name>
    <dbReference type="NCBI Taxonomy" id="83332"/>
    <lineage>
        <taxon>Bacteria</taxon>
        <taxon>Bacillati</taxon>
        <taxon>Actinomycetota</taxon>
        <taxon>Actinomycetes</taxon>
        <taxon>Mycobacteriales</taxon>
        <taxon>Mycobacteriaceae</taxon>
        <taxon>Mycobacterium</taxon>
        <taxon>Mycobacterium tuberculosis complex</taxon>
    </lineage>
</organism>
<comment type="function">
    <text evidence="1">An RNA-guided dsDNA endonuclease. When guided by an RNA derived from the right-end element of its insertion sequence element (IS), cleaves DNA downstream of the transposon-associated motif (TAM). Cleaves supercoiled and linear DNA in a staggered manner 15-21 bases from the TAM yielding 5'-overhangs. Binds reRNA, an approximately 150 nucleotide base sRNA derived from the 3' end of its own gene, the right end (RE) of the insertion sequence (IS) plus sequence downstream of the IS.</text>
</comment>
<comment type="similarity">
    <text evidence="3">In the N-terminal section; belongs to the transposase 2 family.</text>
</comment>
<comment type="similarity">
    <text evidence="3">In the C-terminal section; belongs to the transposase 35 family.</text>
</comment>
<protein>
    <recommendedName>
        <fullName evidence="1">Putative RNA-guided DNA endonuclease Rv2885c</fullName>
        <ecNumber evidence="1">3.1.21.-</ecNumber>
    </recommendedName>
</protein>
<reference key="1">
    <citation type="journal article" date="1998" name="Nature">
        <title>Deciphering the biology of Mycobacterium tuberculosis from the complete genome sequence.</title>
        <authorList>
            <person name="Cole S.T."/>
            <person name="Brosch R."/>
            <person name="Parkhill J."/>
            <person name="Garnier T."/>
            <person name="Churcher C.M."/>
            <person name="Harris D.E."/>
            <person name="Gordon S.V."/>
            <person name="Eiglmeier K."/>
            <person name="Gas S."/>
            <person name="Barry C.E. III"/>
            <person name="Tekaia F."/>
            <person name="Badcock K."/>
            <person name="Basham D."/>
            <person name="Brown D."/>
            <person name="Chillingworth T."/>
            <person name="Connor R."/>
            <person name="Davies R.M."/>
            <person name="Devlin K."/>
            <person name="Feltwell T."/>
            <person name="Gentles S."/>
            <person name="Hamlin N."/>
            <person name="Holroyd S."/>
            <person name="Hornsby T."/>
            <person name="Jagels K."/>
            <person name="Krogh A."/>
            <person name="McLean J."/>
            <person name="Moule S."/>
            <person name="Murphy L.D."/>
            <person name="Oliver S."/>
            <person name="Osborne J."/>
            <person name="Quail M.A."/>
            <person name="Rajandream M.A."/>
            <person name="Rogers J."/>
            <person name="Rutter S."/>
            <person name="Seeger K."/>
            <person name="Skelton S."/>
            <person name="Squares S."/>
            <person name="Squares R."/>
            <person name="Sulston J.E."/>
            <person name="Taylor K."/>
            <person name="Whitehead S."/>
            <person name="Barrell B.G."/>
        </authorList>
    </citation>
    <scope>NUCLEOTIDE SEQUENCE [LARGE SCALE GENOMIC DNA]</scope>
    <source>
        <strain>ATCC 25618 / H37Rv</strain>
    </source>
</reference>
<proteinExistence type="inferred from homology"/>
<feature type="chain" id="PRO_0000014146" description="Putative RNA-guided DNA endonuclease Rv2885c">
    <location>
        <begin position="1"/>
        <end position="460"/>
    </location>
</feature>
<feature type="region of interest" description="Disordered" evidence="2">
    <location>
        <begin position="415"/>
        <end position="460"/>
    </location>
</feature>
<feature type="active site" evidence="1">
    <location>
        <position position="224"/>
    </location>
</feature>
<feature type="active site" evidence="1">
    <location>
        <position position="313"/>
    </location>
</feature>
<feature type="active site" evidence="1">
    <location>
        <position position="399"/>
    </location>
</feature>
<feature type="binding site" evidence="1">
    <location>
        <position position="372"/>
    </location>
    <ligand>
        <name>Zn(2+)</name>
        <dbReference type="ChEBI" id="CHEBI:29105"/>
    </ligand>
</feature>
<feature type="binding site" evidence="1">
    <location>
        <position position="375"/>
    </location>
    <ligand>
        <name>Zn(2+)</name>
        <dbReference type="ChEBI" id="CHEBI:29105"/>
    </ligand>
</feature>
<feature type="binding site" evidence="1">
    <location>
        <position position="389"/>
    </location>
    <ligand>
        <name>Zn(2+)</name>
        <dbReference type="ChEBI" id="CHEBI:29105"/>
    </ligand>
</feature>
<feature type="binding site" evidence="1">
    <location>
        <position position="392"/>
    </location>
    <ligand>
        <name>Zn(2+)</name>
        <dbReference type="ChEBI" id="CHEBI:29105"/>
    </ligand>
</feature>